<protein>
    <recommendedName>
        <fullName>Phycobiliprotein ApcE</fullName>
        <ecNumber>4.-.-.-</ecNumber>
    </recommendedName>
    <alternativeName>
        <fullName>Anchor polypeptide</fullName>
    </alternativeName>
    <alternativeName>
        <fullName>PBS-anchor protein</fullName>
    </alternativeName>
    <alternativeName>
        <fullName>Phycobilisome linker polypeptide</fullName>
    </alternativeName>
</protein>
<gene>
    <name type="primary">apcE</name>
</gene>
<geneLocation type="cyanelle"/>
<name>APCE_CYAPA</name>
<sequence>MTSVSGGSPLLRPQLYRTVTVSTILQADQQDRFLESGELSQLATYLTSGNKRLDIIITLTNNSEAIVSRAANRIFVGGSPISYLERPQSGIDAKLGTNSYVESQSGFLEGFRSLFNTGGADITPAGFKPINVSRYGITRMQKSLRDLDWFLRYITYAIVAGDPNILVTNIRGLREIIENACSSAVTLVALQEMRRASLSYFTKDASAEAIVKQYFDVVITEFLAPAPSDLVRKRTSTSLQGLKLPQIYANAVVQKPRFQMKSTLSTTEKETVIKAVYRQIFERDVRRAYSLKNYDLESKVKNGQLSIKEFVRALGKSKLYAQQFYEPFINSRALELAFRHFLGRGPGSREEVQEYFALISKGGLPLLVDALVDSKEYEEYFGEEIVPYLRTLGEEAQECRNWGAQIKLLNYSARFQKTPQFITLFAGYKNPLPDQHPYGQGNDPLEIQFGAIFPKETLQTKAAFFGKDTRRILIRRGNGIDNQLSNPSARQKSPGSFGPKVFKLSSVASLNKNTKNVSFGETSTQAIIKAVYLQIIGRETYESQRLKVWEIKLENGEISIREFVKQVAKSNLFRSLYWTPYYVCKSIEYINRRILGRPTYGRSEINKLFDIAAKKGFYALIDTLMDSPEYDESFGENTVPYERYLTPGGLALRIKRPNLSVSKEAKNELRFIELGAINESRGERSIQLRIQQGVSKRREQTKIFKLNHHDDKVNLEKVIKAVYRQVFERDMDMYRIQNEFTVFESRLKNKEISVKEFVEALGQSQLYQKEFYTPYPNTKVIELAMKHFLGRAPKNQIEIRKYNQLLASNGIAALIRSLVSSLEYAEVFGEDTVPYRRFPTFPATNFPNTEKLYNSLTKQTKTISNPSFAPEKTRRIDLLSPGA</sequence>
<reference key="1">
    <citation type="journal article" date="1995" name="Plant Mol. Biol. Rep.">
        <title>Nucleotide sequence of the cyanelle DNA from Cyanophora paradoxa.</title>
        <authorList>
            <person name="Stirewalt V.L."/>
            <person name="Michalowski C.B."/>
            <person name="Loeffelhardt W."/>
            <person name="Bohnert H.J."/>
            <person name="Bryant D.A."/>
        </authorList>
    </citation>
    <scope>NUCLEOTIDE SEQUENCE [LARGE SCALE GENOMIC DNA]</scope>
    <source>
        <strain>UTEX LB 555 / Pringsheim</strain>
    </source>
</reference>
<reference key="2">
    <citation type="book" date="1997" name="Eukaryotism and symbiosis">
        <title>The complete sequence of the cyanelle genome of Cyanophora paradoxa: the genetic complexity of a primitive plastid.</title>
        <editorList>
            <person name="Schenk H.E.A."/>
            <person name="Herrmann R."/>
            <person name="Jeon K.W."/>
            <person name="Mueller N.E."/>
            <person name="Schwemmler W."/>
        </editorList>
        <authorList>
            <person name="Loeffelhardt W."/>
            <person name="Stirewalt V.L."/>
            <person name="Michalowski C.B."/>
            <person name="Annarella M."/>
            <person name="Farley J.Y."/>
            <person name="Schluchter W.M."/>
            <person name="Chung S."/>
            <person name="Newmann-Spallart C."/>
            <person name="Steiner J.M."/>
            <person name="Jakowitsch J."/>
            <person name="Bohnert H.J."/>
            <person name="Bryant D.A."/>
        </authorList>
    </citation>
    <scope>NUCLEOTIDE SEQUENCE [LARGE SCALE GENOMIC DNA]</scope>
    <source>
        <strain>UTEX LB 555 / Pringsheim</strain>
    </source>
</reference>
<comment type="function">
    <text evidence="1">This protein is postulated to act both as terminal energy acceptor and as a linker polypeptide that stabilizes the phycobilisome architecture. May have intrinsic bilin lyase activity (By similarity).</text>
</comment>
<comment type="subcellular location">
    <subcellularLocation>
        <location evidence="1">Plastid</location>
        <location evidence="1">Cyanelle thylakoid membrane</location>
        <topology evidence="1">Peripheral membrane protein</topology>
        <orientation evidence="1">Stromal side</orientation>
    </subcellularLocation>
</comment>
<comment type="PTM">
    <text evidence="4">Contains one covalently linked bilin chromophore. This protein autochromophorylates (Potential).</text>
</comment>
<comment type="similarity">
    <text evidence="3">Belongs to the phycobilisome linker protein family.</text>
</comment>
<keyword id="KW-0042">Antenna complex</keyword>
<keyword id="KW-0089">Bile pigment</keyword>
<keyword id="KW-0157">Chromophore</keyword>
<keyword id="KW-0194">Cyanelle</keyword>
<keyword id="KW-0249">Electron transport</keyword>
<keyword id="KW-0456">Lyase</keyword>
<keyword id="KW-0472">Membrane</keyword>
<keyword id="KW-0602">Photosynthesis</keyword>
<keyword id="KW-0605">Phycobilisome</keyword>
<keyword id="KW-0934">Plastid</keyword>
<keyword id="KW-0677">Repeat</keyword>
<keyword id="KW-0793">Thylakoid</keyword>
<keyword id="KW-0813">Transport</keyword>
<feature type="chain" id="PRO_0000199258" description="Phycobiliprotein ApcE">
    <location>
        <begin position="1"/>
        <end position="883"/>
    </location>
</feature>
<feature type="domain" description="PBS-linker 1" evidence="3">
    <location>
        <begin position="238"/>
        <end position="418"/>
    </location>
</feature>
<feature type="domain" description="PBS-linker 2" evidence="3">
    <location>
        <begin position="488"/>
        <end position="669"/>
    </location>
</feature>
<feature type="domain" description="PBS-linker 3" evidence="3">
    <location>
        <begin position="684"/>
        <end position="861"/>
    </location>
</feature>
<feature type="binding site" description="covalent" evidence="2">
    <location>
        <position position="181"/>
    </location>
    <ligand>
        <name>(2R,3E)-phycocyanobilin</name>
        <dbReference type="ChEBI" id="CHEBI:85275"/>
    </ligand>
</feature>
<dbReference type="EC" id="4.-.-.-"/>
<dbReference type="EMBL" id="U30821">
    <property type="protein sequence ID" value="AAA81191.1"/>
    <property type="molecule type" value="Genomic_DNA"/>
</dbReference>
<dbReference type="PIR" id="T06848">
    <property type="entry name" value="T06848"/>
</dbReference>
<dbReference type="RefSeq" id="NP_043160.1">
    <property type="nucleotide sequence ID" value="NC_001675.1"/>
</dbReference>
<dbReference type="SMR" id="P48088"/>
<dbReference type="GeneID" id="801542"/>
<dbReference type="GO" id="GO:0033115">
    <property type="term" value="C:cyanelle thylakoid membrane"/>
    <property type="evidence" value="ECO:0007669"/>
    <property type="project" value="UniProtKB-SubCell"/>
</dbReference>
<dbReference type="GO" id="GO:0030089">
    <property type="term" value="C:phycobilisome"/>
    <property type="evidence" value="ECO:0007669"/>
    <property type="project" value="UniProtKB-KW"/>
</dbReference>
<dbReference type="GO" id="GO:0016829">
    <property type="term" value="F:lyase activity"/>
    <property type="evidence" value="ECO:0007669"/>
    <property type="project" value="UniProtKB-KW"/>
</dbReference>
<dbReference type="GO" id="GO:0015979">
    <property type="term" value="P:photosynthesis"/>
    <property type="evidence" value="ECO:0007669"/>
    <property type="project" value="UniProtKB-KW"/>
</dbReference>
<dbReference type="CDD" id="cd12128">
    <property type="entry name" value="PBP_PBS-LCM"/>
    <property type="match status" value="1"/>
</dbReference>
<dbReference type="Gene3D" id="1.10.3130.20">
    <property type="entry name" value="Phycobilisome linker domain"/>
    <property type="match status" value="3"/>
</dbReference>
<dbReference type="Gene3D" id="1.10.490.20">
    <property type="entry name" value="Phycocyanins"/>
    <property type="match status" value="1"/>
</dbReference>
<dbReference type="InterPro" id="IPR009050">
    <property type="entry name" value="Globin-like_sf"/>
</dbReference>
<dbReference type="InterPro" id="IPR001297">
    <property type="entry name" value="PBS_linker_dom"/>
</dbReference>
<dbReference type="InterPro" id="IPR038255">
    <property type="entry name" value="PBS_linker_sf"/>
</dbReference>
<dbReference type="InterPro" id="IPR012128">
    <property type="entry name" value="Phycobilisome_asu/bsu"/>
</dbReference>
<dbReference type="InterPro" id="IPR038719">
    <property type="entry name" value="Phycobilisome_asu/bsu_sf"/>
</dbReference>
<dbReference type="PANTHER" id="PTHR34011:SF6">
    <property type="entry name" value="PHYCOBILIPROTEIN APCE"/>
    <property type="match status" value="1"/>
</dbReference>
<dbReference type="PANTHER" id="PTHR34011">
    <property type="entry name" value="PHYCOBILISOME 32.1 KDA LINKER POLYPEPTIDE, PHYCOCYANIN-ASSOCIATED, ROD 2-RELATED"/>
    <property type="match status" value="1"/>
</dbReference>
<dbReference type="Pfam" id="PF00427">
    <property type="entry name" value="PBS_linker_poly"/>
    <property type="match status" value="3"/>
</dbReference>
<dbReference type="Pfam" id="PF00502">
    <property type="entry name" value="Phycobilisome"/>
    <property type="match status" value="2"/>
</dbReference>
<dbReference type="SUPFAM" id="SSF46458">
    <property type="entry name" value="Globin-like"/>
    <property type="match status" value="1"/>
</dbReference>
<dbReference type="PROSITE" id="PS51445">
    <property type="entry name" value="PBS_LINKER"/>
    <property type="match status" value="3"/>
</dbReference>
<accession>P48088</accession>
<proteinExistence type="inferred from homology"/>
<organism>
    <name type="scientific">Cyanophora paradoxa</name>
    <dbReference type="NCBI Taxonomy" id="2762"/>
    <lineage>
        <taxon>Eukaryota</taxon>
        <taxon>Glaucocystophyceae</taxon>
        <taxon>Cyanophoraceae</taxon>
        <taxon>Cyanophora</taxon>
    </lineage>
</organism>
<evidence type="ECO:0000250" key="1"/>
<evidence type="ECO:0000255" key="2"/>
<evidence type="ECO:0000255" key="3">
    <source>
        <dbReference type="PROSITE-ProRule" id="PRU00775"/>
    </source>
</evidence>
<evidence type="ECO:0000305" key="4"/>